<feature type="initiator methionine" description="Removed" evidence="1">
    <location>
        <position position="1"/>
    </location>
</feature>
<feature type="chain" id="PRO_0000329451" description="Probable asparagine synthetase [glutamine-hydrolyzing]">
    <location>
        <begin position="2"/>
        <end position="557"/>
    </location>
</feature>
<feature type="domain" description="Glutamine amidotransferase type-2" evidence="2">
    <location>
        <begin position="2"/>
        <end position="188"/>
    </location>
</feature>
<feature type="domain" description="Asparagine synthetase">
    <location>
        <begin position="217"/>
        <end position="466"/>
    </location>
</feature>
<feature type="region of interest" description="Disordered" evidence="3">
    <location>
        <begin position="538"/>
        <end position="557"/>
    </location>
</feature>
<feature type="active site" description="For GATase activity" evidence="1">
    <location>
        <position position="2"/>
    </location>
</feature>
<feature type="binding site" evidence="1">
    <location>
        <begin position="50"/>
        <end position="54"/>
    </location>
    <ligand>
        <name>L-glutamine</name>
        <dbReference type="ChEBI" id="CHEBI:58359"/>
    </ligand>
</feature>
<feature type="binding site" evidence="1">
    <location>
        <begin position="75"/>
        <end position="77"/>
    </location>
    <ligand>
        <name>L-glutamine</name>
        <dbReference type="ChEBI" id="CHEBI:58359"/>
    </ligand>
</feature>
<feature type="binding site" evidence="1">
    <location>
        <position position="101"/>
    </location>
    <ligand>
        <name>L-glutamine</name>
        <dbReference type="ChEBI" id="CHEBI:58359"/>
    </ligand>
</feature>
<feature type="binding site" evidence="1">
    <location>
        <position position="239"/>
    </location>
    <ligand>
        <name>ATP</name>
        <dbReference type="ChEBI" id="CHEBI:30616"/>
    </ligand>
</feature>
<feature type="binding site" evidence="1">
    <location>
        <position position="279"/>
    </location>
    <ligand>
        <name>ATP</name>
        <dbReference type="ChEBI" id="CHEBI:30616"/>
    </ligand>
</feature>
<feature type="binding site" evidence="1">
    <location>
        <begin position="353"/>
        <end position="354"/>
    </location>
    <ligand>
        <name>ATP</name>
        <dbReference type="ChEBI" id="CHEBI:30616"/>
    </ligand>
</feature>
<feature type="site" description="Important for beta-aspartyl-AMP intermediate formation" evidence="1">
    <location>
        <position position="355"/>
    </location>
</feature>
<sequence length="557" mass="63487">MCGILAILNSLEEASKLRKKALSLSSRLRHRGPDWNGIYQSSDSILTHERLAIVGLENGAQPLLNEDETIALTVNGEIYNHEKLREDLVATGKHTFKTHSDCEPILHLYEDKGDDFVHMLDGDFAFVVYNKKANSFLAARDPIGVVPLYIGWHKDGSIWFSSEMKAIKDDCYKFQPFPPGHYFSSKTKEFVRYYKPNWIMGDSPSGVLKSEEQVLPAIKEAFEQAVVSRMMSDVPYGVLLSGGLDSSLVASIVSRHAEQRVEDHEKSRAWWPRIHSFCIGLKDAPDLKAARDVADYLQTVHHEYHFTVQEGIDALPDVIKHLETYDVTTIRASTPMYFLSRKIKAMGVKMVLSGEGSDEIFGGYLYFHNAPDANEFHVECCRRIKALHSFDCLRANKSTAAWGVEVRVPFLDQRFLDVAMNIDPSHKVCHDDQGKKRMEKYILRKAFETKEGEKPYLPSSVLWRQKEQFSDGVGYSWIDGLKENAENEVSDEEFAKRESYFPDDTPTTKEAFLYRKMFEAIYPGKECMETVQRWIPTWGASQDPSGRAQKVHLSTTE</sequence>
<organism>
    <name type="scientific">Dictyostelium discoideum</name>
    <name type="common">Social amoeba</name>
    <dbReference type="NCBI Taxonomy" id="44689"/>
    <lineage>
        <taxon>Eukaryota</taxon>
        <taxon>Amoebozoa</taxon>
        <taxon>Evosea</taxon>
        <taxon>Eumycetozoa</taxon>
        <taxon>Dictyostelia</taxon>
        <taxon>Dictyosteliales</taxon>
        <taxon>Dictyosteliaceae</taxon>
        <taxon>Dictyostelium</taxon>
    </lineage>
</organism>
<comment type="catalytic activity">
    <reaction>
        <text>L-aspartate + L-glutamine + ATP + H2O = L-asparagine + L-glutamate + AMP + diphosphate + H(+)</text>
        <dbReference type="Rhea" id="RHEA:12228"/>
        <dbReference type="ChEBI" id="CHEBI:15377"/>
        <dbReference type="ChEBI" id="CHEBI:15378"/>
        <dbReference type="ChEBI" id="CHEBI:29985"/>
        <dbReference type="ChEBI" id="CHEBI:29991"/>
        <dbReference type="ChEBI" id="CHEBI:30616"/>
        <dbReference type="ChEBI" id="CHEBI:33019"/>
        <dbReference type="ChEBI" id="CHEBI:58048"/>
        <dbReference type="ChEBI" id="CHEBI:58359"/>
        <dbReference type="ChEBI" id="CHEBI:456215"/>
        <dbReference type="EC" id="6.3.5.4"/>
    </reaction>
</comment>
<comment type="pathway">
    <text>Amino-acid biosynthesis; L-asparagine biosynthesis; L-asparagine from L-aspartate (L-Gln route): step 1/1.</text>
</comment>
<gene>
    <name type="primary">asns</name>
    <name type="synonym">asnA</name>
    <name type="ORF">DDB_G0286059</name>
</gene>
<protein>
    <recommendedName>
        <fullName>Probable asparagine synthetase [glutamine-hydrolyzing]</fullName>
        <ecNumber>6.3.5.4</ecNumber>
    </recommendedName>
    <alternativeName>
        <fullName>Glutamine-dependent asparagine synthetase</fullName>
    </alternativeName>
</protein>
<proteinExistence type="evidence at protein level"/>
<name>ASNS_DICDI</name>
<evidence type="ECO:0000250" key="1"/>
<evidence type="ECO:0000255" key="2">
    <source>
        <dbReference type="PROSITE-ProRule" id="PRU00609"/>
    </source>
</evidence>
<evidence type="ECO:0000256" key="3">
    <source>
        <dbReference type="SAM" id="MobiDB-lite"/>
    </source>
</evidence>
<dbReference type="EC" id="6.3.5.4"/>
<dbReference type="EMBL" id="AAFI02000085">
    <property type="protein sequence ID" value="EAL64408.1"/>
    <property type="molecule type" value="Genomic_DNA"/>
</dbReference>
<dbReference type="RefSeq" id="XP_637920.1">
    <property type="nucleotide sequence ID" value="XM_632828.1"/>
</dbReference>
<dbReference type="SMR" id="Q54MB4"/>
<dbReference type="FunCoup" id="Q54MB4">
    <property type="interactions" value="372"/>
</dbReference>
<dbReference type="STRING" id="44689.Q54MB4"/>
<dbReference type="MEROPS" id="C44.001"/>
<dbReference type="PaxDb" id="44689-DDB0230140"/>
<dbReference type="EnsemblProtists" id="EAL64408">
    <property type="protein sequence ID" value="EAL64408"/>
    <property type="gene ID" value="DDB_G0286059"/>
</dbReference>
<dbReference type="GeneID" id="8625431"/>
<dbReference type="KEGG" id="ddi:DDB_G0286059"/>
<dbReference type="dictyBase" id="DDB_G0286059">
    <property type="gene designation" value="asns"/>
</dbReference>
<dbReference type="VEuPathDB" id="AmoebaDB:DDB_G0286059"/>
<dbReference type="eggNOG" id="KOG0571">
    <property type="taxonomic scope" value="Eukaryota"/>
</dbReference>
<dbReference type="HOGENOM" id="CLU_014658_2_2_1"/>
<dbReference type="InParanoid" id="Q54MB4"/>
<dbReference type="OMA" id="GIVCAFD"/>
<dbReference type="PhylomeDB" id="Q54MB4"/>
<dbReference type="Reactome" id="R-DDI-8963693">
    <property type="pathway name" value="Aspartate and asparagine metabolism"/>
</dbReference>
<dbReference type="UniPathway" id="UPA00134">
    <property type="reaction ID" value="UER00195"/>
</dbReference>
<dbReference type="PRO" id="PR:Q54MB4"/>
<dbReference type="Proteomes" id="UP000002195">
    <property type="component" value="Chromosome 4"/>
</dbReference>
<dbReference type="GO" id="GO:0005829">
    <property type="term" value="C:cytosol"/>
    <property type="evidence" value="ECO:0000318"/>
    <property type="project" value="GO_Central"/>
</dbReference>
<dbReference type="GO" id="GO:0045335">
    <property type="term" value="C:phagocytic vesicle"/>
    <property type="evidence" value="ECO:0007005"/>
    <property type="project" value="dictyBase"/>
</dbReference>
<dbReference type="GO" id="GO:0004066">
    <property type="term" value="F:asparagine synthase (glutamine-hydrolyzing) activity"/>
    <property type="evidence" value="ECO:0000250"/>
    <property type="project" value="dictyBase"/>
</dbReference>
<dbReference type="GO" id="GO:0005524">
    <property type="term" value="F:ATP binding"/>
    <property type="evidence" value="ECO:0007669"/>
    <property type="project" value="UniProtKB-KW"/>
</dbReference>
<dbReference type="GO" id="GO:0006529">
    <property type="term" value="P:asparagine biosynthetic process"/>
    <property type="evidence" value="ECO:0000250"/>
    <property type="project" value="dictyBase"/>
</dbReference>
<dbReference type="GO" id="GO:0070981">
    <property type="term" value="P:L-asparagine biosynthetic process"/>
    <property type="evidence" value="ECO:0007669"/>
    <property type="project" value="UniProtKB-UniPathway"/>
</dbReference>
<dbReference type="CDD" id="cd01991">
    <property type="entry name" value="Asn_synthase_B_C"/>
    <property type="match status" value="1"/>
</dbReference>
<dbReference type="CDD" id="cd00712">
    <property type="entry name" value="AsnB"/>
    <property type="match status" value="1"/>
</dbReference>
<dbReference type="FunFam" id="3.40.50.620:FF:000031">
    <property type="entry name" value="Asparagine synthase B"/>
    <property type="match status" value="1"/>
</dbReference>
<dbReference type="Gene3D" id="3.60.20.10">
    <property type="entry name" value="Glutamine Phosphoribosylpyrophosphate, subunit 1, domain 1"/>
    <property type="match status" value="1"/>
</dbReference>
<dbReference type="Gene3D" id="3.40.50.620">
    <property type="entry name" value="HUPs"/>
    <property type="match status" value="1"/>
</dbReference>
<dbReference type="InterPro" id="IPR006426">
    <property type="entry name" value="Asn_synth_AEB"/>
</dbReference>
<dbReference type="InterPro" id="IPR001962">
    <property type="entry name" value="Asn_synthase"/>
</dbReference>
<dbReference type="InterPro" id="IPR050795">
    <property type="entry name" value="Asn_Synthetase"/>
</dbReference>
<dbReference type="InterPro" id="IPR033738">
    <property type="entry name" value="AsnB_N"/>
</dbReference>
<dbReference type="InterPro" id="IPR017932">
    <property type="entry name" value="GATase_2_dom"/>
</dbReference>
<dbReference type="InterPro" id="IPR029055">
    <property type="entry name" value="Ntn_hydrolases_N"/>
</dbReference>
<dbReference type="InterPro" id="IPR014729">
    <property type="entry name" value="Rossmann-like_a/b/a_fold"/>
</dbReference>
<dbReference type="NCBIfam" id="TIGR01536">
    <property type="entry name" value="asn_synth_AEB"/>
    <property type="match status" value="1"/>
</dbReference>
<dbReference type="NCBIfam" id="NF006949">
    <property type="entry name" value="PRK09431.1"/>
    <property type="match status" value="1"/>
</dbReference>
<dbReference type="PANTHER" id="PTHR11772">
    <property type="entry name" value="ASPARAGINE SYNTHETASE"/>
    <property type="match status" value="1"/>
</dbReference>
<dbReference type="PANTHER" id="PTHR11772:SF2">
    <property type="entry name" value="ASPARAGINE SYNTHETASE [GLUTAMINE-HYDROLYZING]"/>
    <property type="match status" value="1"/>
</dbReference>
<dbReference type="Pfam" id="PF00733">
    <property type="entry name" value="Asn_synthase"/>
    <property type="match status" value="1"/>
</dbReference>
<dbReference type="Pfam" id="PF13537">
    <property type="entry name" value="GATase_7"/>
    <property type="match status" value="1"/>
</dbReference>
<dbReference type="PIRSF" id="PIRSF001589">
    <property type="entry name" value="Asn_synthetase_glu-h"/>
    <property type="match status" value="1"/>
</dbReference>
<dbReference type="SUPFAM" id="SSF52402">
    <property type="entry name" value="Adenine nucleotide alpha hydrolases-like"/>
    <property type="match status" value="1"/>
</dbReference>
<dbReference type="SUPFAM" id="SSF56235">
    <property type="entry name" value="N-terminal nucleophile aminohydrolases (Ntn hydrolases)"/>
    <property type="match status" value="1"/>
</dbReference>
<dbReference type="PROSITE" id="PS51278">
    <property type="entry name" value="GATASE_TYPE_2"/>
    <property type="match status" value="1"/>
</dbReference>
<accession>Q54MB4</accession>
<keyword id="KW-0028">Amino-acid biosynthesis</keyword>
<keyword id="KW-0061">Asparagine biosynthesis</keyword>
<keyword id="KW-0067">ATP-binding</keyword>
<keyword id="KW-0315">Glutamine amidotransferase</keyword>
<keyword id="KW-0436">Ligase</keyword>
<keyword id="KW-0547">Nucleotide-binding</keyword>
<keyword id="KW-1185">Reference proteome</keyword>
<reference key="1">
    <citation type="journal article" date="2005" name="Nature">
        <title>The genome of the social amoeba Dictyostelium discoideum.</title>
        <authorList>
            <person name="Eichinger L."/>
            <person name="Pachebat J.A."/>
            <person name="Gloeckner G."/>
            <person name="Rajandream M.A."/>
            <person name="Sucgang R."/>
            <person name="Berriman M."/>
            <person name="Song J."/>
            <person name="Olsen R."/>
            <person name="Szafranski K."/>
            <person name="Xu Q."/>
            <person name="Tunggal B."/>
            <person name="Kummerfeld S."/>
            <person name="Madera M."/>
            <person name="Konfortov B.A."/>
            <person name="Rivero F."/>
            <person name="Bankier A.T."/>
            <person name="Lehmann R."/>
            <person name="Hamlin N."/>
            <person name="Davies R."/>
            <person name="Gaudet P."/>
            <person name="Fey P."/>
            <person name="Pilcher K."/>
            <person name="Chen G."/>
            <person name="Saunders D."/>
            <person name="Sodergren E.J."/>
            <person name="Davis P."/>
            <person name="Kerhornou A."/>
            <person name="Nie X."/>
            <person name="Hall N."/>
            <person name="Anjard C."/>
            <person name="Hemphill L."/>
            <person name="Bason N."/>
            <person name="Farbrother P."/>
            <person name="Desany B."/>
            <person name="Just E."/>
            <person name="Morio T."/>
            <person name="Rost R."/>
            <person name="Churcher C.M."/>
            <person name="Cooper J."/>
            <person name="Haydock S."/>
            <person name="van Driessche N."/>
            <person name="Cronin A."/>
            <person name="Goodhead I."/>
            <person name="Muzny D.M."/>
            <person name="Mourier T."/>
            <person name="Pain A."/>
            <person name="Lu M."/>
            <person name="Harper D."/>
            <person name="Lindsay R."/>
            <person name="Hauser H."/>
            <person name="James K.D."/>
            <person name="Quiles M."/>
            <person name="Madan Babu M."/>
            <person name="Saito T."/>
            <person name="Buchrieser C."/>
            <person name="Wardroper A."/>
            <person name="Felder M."/>
            <person name="Thangavelu M."/>
            <person name="Johnson D."/>
            <person name="Knights A."/>
            <person name="Loulseged H."/>
            <person name="Mungall K.L."/>
            <person name="Oliver K."/>
            <person name="Price C."/>
            <person name="Quail M.A."/>
            <person name="Urushihara H."/>
            <person name="Hernandez J."/>
            <person name="Rabbinowitsch E."/>
            <person name="Steffen D."/>
            <person name="Sanders M."/>
            <person name="Ma J."/>
            <person name="Kohara Y."/>
            <person name="Sharp S."/>
            <person name="Simmonds M.N."/>
            <person name="Spiegler S."/>
            <person name="Tivey A."/>
            <person name="Sugano S."/>
            <person name="White B."/>
            <person name="Walker D."/>
            <person name="Woodward J.R."/>
            <person name="Winckler T."/>
            <person name="Tanaka Y."/>
            <person name="Shaulsky G."/>
            <person name="Schleicher M."/>
            <person name="Weinstock G.M."/>
            <person name="Rosenthal A."/>
            <person name="Cox E.C."/>
            <person name="Chisholm R.L."/>
            <person name="Gibbs R.A."/>
            <person name="Loomis W.F."/>
            <person name="Platzer M."/>
            <person name="Kay R.R."/>
            <person name="Williams J.G."/>
            <person name="Dear P.H."/>
            <person name="Noegel A.A."/>
            <person name="Barrell B.G."/>
            <person name="Kuspa A."/>
        </authorList>
    </citation>
    <scope>NUCLEOTIDE SEQUENCE [LARGE SCALE GENOMIC DNA]</scope>
    <source>
        <strain>AX4</strain>
    </source>
</reference>
<reference key="2">
    <citation type="journal article" date="2006" name="Mol. Cell. Proteomics">
        <title>Proteomics fingerprinting of phagosome maturation and evidence for the role of a Galpha during uptake.</title>
        <authorList>
            <person name="Gotthardt D."/>
            <person name="Blancheteau V."/>
            <person name="Bosserhoff A."/>
            <person name="Ruppert T."/>
            <person name="Delorenzi M."/>
            <person name="Soldati T."/>
        </authorList>
    </citation>
    <scope>IDENTIFICATION BY MASS SPECTROMETRY [LARGE SCALE ANALYSIS]</scope>
    <source>
        <strain>AX2</strain>
    </source>
</reference>